<organism>
    <name type="scientific">Staphylococcus aureus (strain Mu3 / ATCC 700698)</name>
    <dbReference type="NCBI Taxonomy" id="418127"/>
    <lineage>
        <taxon>Bacteria</taxon>
        <taxon>Bacillati</taxon>
        <taxon>Bacillota</taxon>
        <taxon>Bacilli</taxon>
        <taxon>Bacillales</taxon>
        <taxon>Staphylococcaceae</taxon>
        <taxon>Staphylococcus</taxon>
    </lineage>
</organism>
<comment type="function">
    <text evidence="1">This protein is involved in the repair of mismatches in DNA. It is possible that it carries out the mismatch recognition step. This protein has a weak ATPase activity.</text>
</comment>
<comment type="similarity">
    <text evidence="1">Belongs to the DNA mismatch repair MutS family.</text>
</comment>
<evidence type="ECO:0000255" key="1">
    <source>
        <dbReference type="HAMAP-Rule" id="MF_00096"/>
    </source>
</evidence>
<protein>
    <recommendedName>
        <fullName evidence="1">DNA mismatch repair protein MutS</fullName>
    </recommendedName>
</protein>
<keyword id="KW-0067">ATP-binding</keyword>
<keyword id="KW-0227">DNA damage</keyword>
<keyword id="KW-0234">DNA repair</keyword>
<keyword id="KW-0238">DNA-binding</keyword>
<keyword id="KW-0547">Nucleotide-binding</keyword>
<dbReference type="EMBL" id="AP009324">
    <property type="protein sequence ID" value="BAF78168.1"/>
    <property type="molecule type" value="Genomic_DNA"/>
</dbReference>
<dbReference type="RefSeq" id="WP_000073352.1">
    <property type="nucleotide sequence ID" value="NZ_CTYB01000004.1"/>
</dbReference>
<dbReference type="SMR" id="A7X1T6"/>
<dbReference type="KEGG" id="saw:SAHV_1285"/>
<dbReference type="HOGENOM" id="CLU_002472_4_0_9"/>
<dbReference type="GO" id="GO:0005829">
    <property type="term" value="C:cytosol"/>
    <property type="evidence" value="ECO:0007669"/>
    <property type="project" value="TreeGrafter"/>
</dbReference>
<dbReference type="GO" id="GO:0005524">
    <property type="term" value="F:ATP binding"/>
    <property type="evidence" value="ECO:0007669"/>
    <property type="project" value="UniProtKB-UniRule"/>
</dbReference>
<dbReference type="GO" id="GO:0140664">
    <property type="term" value="F:ATP-dependent DNA damage sensor activity"/>
    <property type="evidence" value="ECO:0007669"/>
    <property type="project" value="InterPro"/>
</dbReference>
<dbReference type="GO" id="GO:0003684">
    <property type="term" value="F:damaged DNA binding"/>
    <property type="evidence" value="ECO:0007669"/>
    <property type="project" value="UniProtKB-UniRule"/>
</dbReference>
<dbReference type="GO" id="GO:0030983">
    <property type="term" value="F:mismatched DNA binding"/>
    <property type="evidence" value="ECO:0007669"/>
    <property type="project" value="InterPro"/>
</dbReference>
<dbReference type="GO" id="GO:0006298">
    <property type="term" value="P:mismatch repair"/>
    <property type="evidence" value="ECO:0007669"/>
    <property type="project" value="UniProtKB-UniRule"/>
</dbReference>
<dbReference type="CDD" id="cd03284">
    <property type="entry name" value="ABC_MutS1"/>
    <property type="match status" value="1"/>
</dbReference>
<dbReference type="FunFam" id="1.10.1420.10:FF:000007">
    <property type="entry name" value="DNA mismatch repair protein MutS"/>
    <property type="match status" value="1"/>
</dbReference>
<dbReference type="FunFam" id="3.40.1170.10:FF:000001">
    <property type="entry name" value="DNA mismatch repair protein MutS"/>
    <property type="match status" value="1"/>
</dbReference>
<dbReference type="FunFam" id="3.40.50.300:FF:000896">
    <property type="entry name" value="DNA mismatch repair protein MutS"/>
    <property type="match status" value="1"/>
</dbReference>
<dbReference type="Gene3D" id="1.10.1420.10">
    <property type="match status" value="2"/>
</dbReference>
<dbReference type="Gene3D" id="3.40.1170.10">
    <property type="entry name" value="DNA repair protein MutS, domain I"/>
    <property type="match status" value="1"/>
</dbReference>
<dbReference type="Gene3D" id="3.30.420.110">
    <property type="entry name" value="MutS, connector domain"/>
    <property type="match status" value="1"/>
</dbReference>
<dbReference type="Gene3D" id="3.40.50.300">
    <property type="entry name" value="P-loop containing nucleotide triphosphate hydrolases"/>
    <property type="match status" value="1"/>
</dbReference>
<dbReference type="HAMAP" id="MF_00096">
    <property type="entry name" value="MutS"/>
    <property type="match status" value="1"/>
</dbReference>
<dbReference type="InterPro" id="IPR005748">
    <property type="entry name" value="DNA_mismatch_repair_MutS"/>
</dbReference>
<dbReference type="InterPro" id="IPR007695">
    <property type="entry name" value="DNA_mismatch_repair_MutS-lik_N"/>
</dbReference>
<dbReference type="InterPro" id="IPR017261">
    <property type="entry name" value="DNA_mismatch_repair_MutS/MSH"/>
</dbReference>
<dbReference type="InterPro" id="IPR000432">
    <property type="entry name" value="DNA_mismatch_repair_MutS_C"/>
</dbReference>
<dbReference type="InterPro" id="IPR007861">
    <property type="entry name" value="DNA_mismatch_repair_MutS_clamp"/>
</dbReference>
<dbReference type="InterPro" id="IPR007696">
    <property type="entry name" value="DNA_mismatch_repair_MutS_core"/>
</dbReference>
<dbReference type="InterPro" id="IPR016151">
    <property type="entry name" value="DNA_mismatch_repair_MutS_N"/>
</dbReference>
<dbReference type="InterPro" id="IPR036187">
    <property type="entry name" value="DNA_mismatch_repair_MutS_sf"/>
</dbReference>
<dbReference type="InterPro" id="IPR007860">
    <property type="entry name" value="DNA_mmatch_repair_MutS_con_dom"/>
</dbReference>
<dbReference type="InterPro" id="IPR045076">
    <property type="entry name" value="MutS"/>
</dbReference>
<dbReference type="InterPro" id="IPR036678">
    <property type="entry name" value="MutS_con_dom_sf"/>
</dbReference>
<dbReference type="InterPro" id="IPR027417">
    <property type="entry name" value="P-loop_NTPase"/>
</dbReference>
<dbReference type="NCBIfam" id="TIGR01070">
    <property type="entry name" value="mutS1"/>
    <property type="match status" value="1"/>
</dbReference>
<dbReference type="NCBIfam" id="NF003810">
    <property type="entry name" value="PRK05399.1"/>
    <property type="match status" value="1"/>
</dbReference>
<dbReference type="PANTHER" id="PTHR11361:SF34">
    <property type="entry name" value="DNA MISMATCH REPAIR PROTEIN MSH1, MITOCHONDRIAL"/>
    <property type="match status" value="1"/>
</dbReference>
<dbReference type="PANTHER" id="PTHR11361">
    <property type="entry name" value="DNA MISMATCH REPAIR PROTEIN MUTS FAMILY MEMBER"/>
    <property type="match status" value="1"/>
</dbReference>
<dbReference type="Pfam" id="PF01624">
    <property type="entry name" value="MutS_I"/>
    <property type="match status" value="1"/>
</dbReference>
<dbReference type="Pfam" id="PF05188">
    <property type="entry name" value="MutS_II"/>
    <property type="match status" value="1"/>
</dbReference>
<dbReference type="Pfam" id="PF05192">
    <property type="entry name" value="MutS_III"/>
    <property type="match status" value="1"/>
</dbReference>
<dbReference type="Pfam" id="PF05190">
    <property type="entry name" value="MutS_IV"/>
    <property type="match status" value="1"/>
</dbReference>
<dbReference type="Pfam" id="PF00488">
    <property type="entry name" value="MutS_V"/>
    <property type="match status" value="1"/>
</dbReference>
<dbReference type="PIRSF" id="PIRSF037677">
    <property type="entry name" value="DNA_mis_repair_Msh6"/>
    <property type="match status" value="1"/>
</dbReference>
<dbReference type="SMART" id="SM00534">
    <property type="entry name" value="MUTSac"/>
    <property type="match status" value="1"/>
</dbReference>
<dbReference type="SMART" id="SM00533">
    <property type="entry name" value="MUTSd"/>
    <property type="match status" value="1"/>
</dbReference>
<dbReference type="SUPFAM" id="SSF55271">
    <property type="entry name" value="DNA repair protein MutS, domain I"/>
    <property type="match status" value="1"/>
</dbReference>
<dbReference type="SUPFAM" id="SSF53150">
    <property type="entry name" value="DNA repair protein MutS, domain II"/>
    <property type="match status" value="1"/>
</dbReference>
<dbReference type="SUPFAM" id="SSF48334">
    <property type="entry name" value="DNA repair protein MutS, domain III"/>
    <property type="match status" value="1"/>
</dbReference>
<dbReference type="SUPFAM" id="SSF52540">
    <property type="entry name" value="P-loop containing nucleoside triphosphate hydrolases"/>
    <property type="match status" value="1"/>
</dbReference>
<dbReference type="PROSITE" id="PS00486">
    <property type="entry name" value="DNA_MISMATCH_REPAIR_2"/>
    <property type="match status" value="1"/>
</dbReference>
<proteinExistence type="inferred from homology"/>
<accession>A7X1T6</accession>
<reference key="1">
    <citation type="journal article" date="2008" name="Antimicrob. Agents Chemother.">
        <title>Mutated response regulator graR is responsible for phenotypic conversion of Staphylococcus aureus from heterogeneous vancomycin-intermediate resistance to vancomycin-intermediate resistance.</title>
        <authorList>
            <person name="Neoh H.-M."/>
            <person name="Cui L."/>
            <person name="Yuzawa H."/>
            <person name="Takeuchi F."/>
            <person name="Matsuo M."/>
            <person name="Hiramatsu K."/>
        </authorList>
    </citation>
    <scope>NUCLEOTIDE SEQUENCE [LARGE SCALE GENOMIC DNA]</scope>
    <source>
        <strain>Mu3 / ATCC 700698</strain>
    </source>
</reference>
<name>MUTS_STAA1</name>
<feature type="chain" id="PRO_1000008104" description="DNA mismatch repair protein MutS">
    <location>
        <begin position="1"/>
        <end position="872"/>
    </location>
</feature>
<feature type="binding site" evidence="1">
    <location>
        <begin position="602"/>
        <end position="609"/>
    </location>
    <ligand>
        <name>ATP</name>
        <dbReference type="ChEBI" id="CHEBI:30616"/>
    </ligand>
</feature>
<gene>
    <name evidence="1" type="primary">mutS</name>
    <name type="ordered locus">SAHV_1285</name>
</gene>
<sequence length="872" mass="99904">MSNVTPMMQQYLKIKSEYQDCLLFFRLGDFYEMFYEDAKEASRVLEITLTKRDAKKENPIPMCGVPYHSADSYIDTLVNNGYKVAICEQMEDPKQTKGMVRREVVRIVTPGTVMEQGGVDDKQNNYILSFVMNQPEIALSYCDVSTGELKVTHFNDEATLLNEITTINPNEVVINDNISDNLKRQINMVTETITVRETLSSEIYSVNQTEHKLMYQATQLLLDYIHHTQKRDLSHIEDVVQYAAIDYMKMDFYAKRNLELTESIRLKSKKGTLLWLMDETKTPMGARRLKQWIDRPLISKEQIEARLDIVDEFSAHFIERDTLRTYLNQVYDIERLVGRVSYGNVNARDLIQLKHSISEIPNIKALLNSMNQNTLVQVNQLEPLDDLLDILEQSLVEEPPISVKDGGLFKVGFNTQLDEYLEASKNGKTWLAELQAKERQRTGIKSLKISFNKVFGYFIEITRANLQNFEPSEFGYMRKQTLSNAERFITDELKEKEDIILGAEDKAIELEYQLFVQLREEVKKYTERLQQQAKIISELDCLQSFAEIAQKYNYTRPSFSENKTLELVESRHPVVERVMDYNDYVPNNCRLDNETFIYLITGPNMSGKSTYMRQVAIISIMAQMGAYVPCKEAVLPIFDQIFTRIGAADDLVSGKSTFMVEMLEAQKALTYATEDSLIIFDEIGRGTSTYDGLALAQAMIEYVAETSHAKTLFSTHYHELTTLDQALPSLKNVHVAANEYKGELIFLHKVKDGAVDDSYGIQVAKLADLPEKVISRAQVILSEFEASAGKKSSISNLKMVENEPEINQENLNLSVEETTDTLSQKDFEQASFDLFENDQESEIELQIKNLNLSNMTPIEALVKLSELQNQLK</sequence>